<gene>
    <name type="primary">POMK</name>
    <name type="synonym">SGK196</name>
    <name type="ORF">RCJMB04_34j1</name>
</gene>
<name>SG196_CHICK</name>
<comment type="function">
    <text evidence="1">Protein O-mannose kinase that specifically mediates phosphorylation at the 6-position of an O-mannose of the trisaccharide (N-acetylgalactosamine (GalNAc)-beta-1,3-N-acetylglucosamine (GlcNAc)-beta-1,4-mannose) to generate phosphorylated O-mannosyl trisaccharide (N-acetylgalactosamine-beta-1,3-N-acetylglucosamine-beta-1,4-(phosphate-6-)mannose). Phosphorylated O-mannosyl trisaccharide is a carbohydrate structure present in alpha-dystroglycan (DAG1), which is required for binding laminin G-like domain-containing extracellular proteins with high affinity. Only shows kinase activity when the GalNAc-beta-3-GlcNAc-beta-terminus is linked to the 4-position of O-mannose, suggesting that this disaccharide serves as the substrate recognition motif (By similarity).</text>
</comment>
<comment type="catalytic activity">
    <reaction>
        <text>3-O-[beta-D-GalNAc-(1-&gt;3)-beta-D-GlcNAc-(1-&gt;4)-alpha-D-Man]-L-Thr-[protein] + ATP = 3-O-[beta-D-GalNAc-(1-&gt;3)-beta-D-GlcNAc-(1-&gt;4)-(O-6-P-alpha-D-Man)]-Thr-[protein] + ADP + H(+)</text>
        <dbReference type="Rhea" id="RHEA:52616"/>
        <dbReference type="Rhea" id="RHEA-COMP:13308"/>
        <dbReference type="Rhea" id="RHEA-COMP:13309"/>
        <dbReference type="ChEBI" id="CHEBI:15378"/>
        <dbReference type="ChEBI" id="CHEBI:30616"/>
        <dbReference type="ChEBI" id="CHEBI:136709"/>
        <dbReference type="ChEBI" id="CHEBI:136710"/>
        <dbReference type="ChEBI" id="CHEBI:456216"/>
        <dbReference type="EC" id="2.7.1.183"/>
    </reaction>
</comment>
<comment type="subcellular location">
    <subcellularLocation>
        <location evidence="1">Endoplasmic reticulum membrane</location>
        <topology evidence="1">Single-pass type II membrane protein</topology>
    </subcellularLocation>
</comment>
<comment type="similarity">
    <text evidence="3">Belongs to the protein kinase superfamily. Ser/Thr protein kinase family. STKL subfamily.</text>
</comment>
<comment type="caution">
    <text evidence="4">Although related to the Ser/Thr protein kinase family, has no protein kinase activity and acts as a mannose kinase instead.</text>
</comment>
<feature type="chain" id="PRO_0000263000" description="Protein O-mannose kinase">
    <location>
        <begin position="1"/>
        <end position="353"/>
    </location>
</feature>
<feature type="topological domain" description="Cytoplasmic" evidence="2">
    <location>
        <begin position="1"/>
        <end position="19"/>
    </location>
</feature>
<feature type="transmembrane region" description="Helical; Signal-anchor for type II membrane protein" evidence="2">
    <location>
        <begin position="20"/>
        <end position="40"/>
    </location>
</feature>
<feature type="topological domain" description="Lumenal" evidence="2">
    <location>
        <begin position="41"/>
        <end position="353"/>
    </location>
</feature>
<feature type="domain" description="Protein kinase" evidence="3">
    <location>
        <begin position="83"/>
        <end position="353"/>
    </location>
</feature>
<feature type="glycosylation site" description="N-linked (GlcNAc...) asparagine" evidence="2">
    <location>
        <position position="163"/>
    </location>
</feature>
<feature type="glycosylation site" description="N-linked (GlcNAc...) asparagine" evidence="2">
    <location>
        <position position="237"/>
    </location>
</feature>
<proteinExistence type="evidence at transcript level"/>
<protein>
    <recommendedName>
        <fullName>Protein O-mannose kinase</fullName>
        <shortName>POMK</shortName>
        <ecNumber>2.7.1.183</ecNumber>
    </recommendedName>
    <alternativeName>
        <fullName>Protein kinase-like protein SgK196</fullName>
    </alternativeName>
    <alternativeName>
        <fullName>Sugen kinase 196</fullName>
    </alternativeName>
</protein>
<dbReference type="EC" id="2.7.1.183"/>
<dbReference type="EMBL" id="AJ851801">
    <property type="protein sequence ID" value="CAH65435.1"/>
    <property type="molecule type" value="mRNA"/>
</dbReference>
<dbReference type="RefSeq" id="NP_001026303.1">
    <property type="nucleotide sequence ID" value="NM_001031132.1"/>
</dbReference>
<dbReference type="SMR" id="Q5F349"/>
<dbReference type="FunCoup" id="Q5F349">
    <property type="interactions" value="387"/>
</dbReference>
<dbReference type="STRING" id="9031.ENSGALP00000042116"/>
<dbReference type="GlyCosmos" id="Q5F349">
    <property type="glycosylation" value="2 sites, No reported glycans"/>
</dbReference>
<dbReference type="GlyGen" id="Q5F349">
    <property type="glycosylation" value="2 sites"/>
</dbReference>
<dbReference type="PaxDb" id="9031-ENSGALP00000042116"/>
<dbReference type="GeneID" id="422491"/>
<dbReference type="KEGG" id="gga:422491"/>
<dbReference type="CTD" id="84197"/>
<dbReference type="VEuPathDB" id="HostDB:geneid_422491"/>
<dbReference type="eggNOG" id="ENOG502QQQV">
    <property type="taxonomic scope" value="Eukaryota"/>
</dbReference>
<dbReference type="InParanoid" id="Q5F349"/>
<dbReference type="OrthoDB" id="4062651at2759"/>
<dbReference type="PhylomeDB" id="Q5F349"/>
<dbReference type="PRO" id="PR:Q5F349"/>
<dbReference type="Proteomes" id="UP000000539">
    <property type="component" value="Unassembled WGS sequence"/>
</dbReference>
<dbReference type="GO" id="GO:0005789">
    <property type="term" value="C:endoplasmic reticulum membrane"/>
    <property type="evidence" value="ECO:0000318"/>
    <property type="project" value="GO_Central"/>
</dbReference>
<dbReference type="GO" id="GO:0005524">
    <property type="term" value="F:ATP binding"/>
    <property type="evidence" value="ECO:0007669"/>
    <property type="project" value="UniProtKB-KW"/>
</dbReference>
<dbReference type="GO" id="GO:0019200">
    <property type="term" value="F:carbohydrate kinase activity"/>
    <property type="evidence" value="ECO:0000318"/>
    <property type="project" value="GO_Central"/>
</dbReference>
<dbReference type="GO" id="GO:0016773">
    <property type="term" value="F:phosphotransferase activity, alcohol group as acceptor"/>
    <property type="evidence" value="ECO:0000250"/>
    <property type="project" value="UniProtKB"/>
</dbReference>
<dbReference type="GO" id="GO:0004672">
    <property type="term" value="F:protein kinase activity"/>
    <property type="evidence" value="ECO:0007669"/>
    <property type="project" value="InterPro"/>
</dbReference>
<dbReference type="GO" id="GO:0046835">
    <property type="term" value="P:carbohydrate phosphorylation"/>
    <property type="evidence" value="ECO:0000250"/>
    <property type="project" value="UniProtKB"/>
</dbReference>
<dbReference type="GO" id="GO:0006493">
    <property type="term" value="P:protein O-linked glycosylation"/>
    <property type="evidence" value="ECO:0000250"/>
    <property type="project" value="UniProtKB"/>
</dbReference>
<dbReference type="FunFam" id="1.10.510.10:FF:000464">
    <property type="entry name" value="Protein O-mannose kinase"/>
    <property type="match status" value="1"/>
</dbReference>
<dbReference type="Gene3D" id="1.10.510.10">
    <property type="entry name" value="Transferase(Phosphotransferase) domain 1"/>
    <property type="match status" value="1"/>
</dbReference>
<dbReference type="InterPro" id="IPR011009">
    <property type="entry name" value="Kinase-like_dom_sf"/>
</dbReference>
<dbReference type="InterPro" id="IPR039318">
    <property type="entry name" value="POMK"/>
</dbReference>
<dbReference type="InterPro" id="IPR000719">
    <property type="entry name" value="Prot_kinase_dom"/>
</dbReference>
<dbReference type="InterPro" id="IPR001245">
    <property type="entry name" value="Ser-Thr/Tyr_kinase_cat_dom"/>
</dbReference>
<dbReference type="PANTHER" id="PTHR22618">
    <property type="entry name" value="PROTEIN O-MANNOSE KINASE"/>
    <property type="match status" value="1"/>
</dbReference>
<dbReference type="PANTHER" id="PTHR22618:SF2">
    <property type="entry name" value="PROTEIN O-MANNOSE KINASE"/>
    <property type="match status" value="1"/>
</dbReference>
<dbReference type="Pfam" id="PF07714">
    <property type="entry name" value="PK_Tyr_Ser-Thr"/>
    <property type="match status" value="1"/>
</dbReference>
<dbReference type="SUPFAM" id="SSF56112">
    <property type="entry name" value="Protein kinase-like (PK-like)"/>
    <property type="match status" value="1"/>
</dbReference>
<dbReference type="PROSITE" id="PS50011">
    <property type="entry name" value="PROTEIN_KINASE_DOM"/>
    <property type="match status" value="1"/>
</dbReference>
<evidence type="ECO:0000250" key="1"/>
<evidence type="ECO:0000255" key="2"/>
<evidence type="ECO:0000255" key="3">
    <source>
        <dbReference type="PROSITE-ProRule" id="PRU00159"/>
    </source>
</evidence>
<evidence type="ECO:0000305" key="4"/>
<reference key="1">
    <citation type="journal article" date="2005" name="Genome Biol.">
        <title>Full-length cDNAs from chicken bursal lymphocytes to facilitate gene function analysis.</title>
        <authorList>
            <person name="Caldwell R.B."/>
            <person name="Kierzek A.M."/>
            <person name="Arakawa H."/>
            <person name="Bezzubov Y."/>
            <person name="Zaim J."/>
            <person name="Fiedler P."/>
            <person name="Kutter S."/>
            <person name="Blagodatski A."/>
            <person name="Kostovska D."/>
            <person name="Koter M."/>
            <person name="Plachy J."/>
            <person name="Carninci P."/>
            <person name="Hayashizaki Y."/>
            <person name="Buerstedde J.-M."/>
        </authorList>
    </citation>
    <scope>NUCLEOTIDE SEQUENCE [LARGE SCALE MRNA]</scope>
    <source>
        <strain>CB</strain>
        <tissue>Bursa of Fabricius</tissue>
    </source>
</reference>
<organism>
    <name type="scientific">Gallus gallus</name>
    <name type="common">Chicken</name>
    <dbReference type="NCBI Taxonomy" id="9031"/>
    <lineage>
        <taxon>Eukaryota</taxon>
        <taxon>Metazoa</taxon>
        <taxon>Chordata</taxon>
        <taxon>Craniata</taxon>
        <taxon>Vertebrata</taxon>
        <taxon>Euteleostomi</taxon>
        <taxon>Archelosauria</taxon>
        <taxon>Archosauria</taxon>
        <taxon>Dinosauria</taxon>
        <taxon>Saurischia</taxon>
        <taxon>Theropoda</taxon>
        <taxon>Coelurosauria</taxon>
        <taxon>Aves</taxon>
        <taxon>Neognathae</taxon>
        <taxon>Galloanserae</taxon>
        <taxon>Galliformes</taxon>
        <taxon>Phasianidae</taxon>
        <taxon>Phasianinae</taxon>
        <taxon>Gallus</taxon>
    </lineage>
</organism>
<keyword id="KW-0067">ATP-binding</keyword>
<keyword id="KW-0256">Endoplasmic reticulum</keyword>
<keyword id="KW-0325">Glycoprotein</keyword>
<keyword id="KW-0418">Kinase</keyword>
<keyword id="KW-0472">Membrane</keyword>
<keyword id="KW-0547">Nucleotide-binding</keyword>
<keyword id="KW-1185">Reference proteome</keyword>
<keyword id="KW-0735">Signal-anchor</keyword>
<keyword id="KW-0808">Transferase</keyword>
<keyword id="KW-0812">Transmembrane</keyword>
<keyword id="KW-1133">Transmembrane helix</keyword>
<sequence>MEKKAHFVKRDFPPREAPSLLLLLLVVAVLLLNALLYLYLGNLHGSSGRADAEPSLCPYGSFKLGPVKNCSPWLSCEAINREVRKLKCVGEGAVKKVFLSEWKENKVVISQLTKPELKEDFLHGLKMLKALQSKHVVRLLGYCEKQFTILTEYHPLGSLRGLNETLHIPKYKSMNTWHRRLMLAIDYVSIIRYLHSSPLGTLVMCDSNDLDKALSQYLLTSDFHILVNDLDALPLVNRSAGRLVKCGHRELWGEFVAPEQRWPYGEDVPFDDDLMPPYDEKTDIWKIPDVSNFFLGHVEGSDIVRLHLFDIHAACKKKDPAERPSAQEVLDTYKKVLTLLIREAAMPSTREML</sequence>
<accession>Q5F349</accession>